<evidence type="ECO:0000255" key="1">
    <source>
        <dbReference type="HAMAP-Rule" id="MF_01444"/>
    </source>
</evidence>
<gene>
    <name type="ordered locus">SACOL1020</name>
</gene>
<proteinExistence type="inferred from homology"/>
<accession>Q5HH71</accession>
<comment type="similarity">
    <text evidence="1">Belongs to the 2H phosphoesterase superfamily. YjcG family.</text>
</comment>
<name>Y1020_STAAC</name>
<organism>
    <name type="scientific">Staphylococcus aureus (strain COL)</name>
    <dbReference type="NCBI Taxonomy" id="93062"/>
    <lineage>
        <taxon>Bacteria</taxon>
        <taxon>Bacillati</taxon>
        <taxon>Bacillota</taxon>
        <taxon>Bacilli</taxon>
        <taxon>Bacillales</taxon>
        <taxon>Staphylococcaceae</taxon>
        <taxon>Staphylococcus</taxon>
    </lineage>
</organism>
<dbReference type="EC" id="3.1.-.-" evidence="1"/>
<dbReference type="EMBL" id="CP000046">
    <property type="protein sequence ID" value="AAW36486.1"/>
    <property type="molecule type" value="Genomic_DNA"/>
</dbReference>
<dbReference type="RefSeq" id="WP_000600392.1">
    <property type="nucleotide sequence ID" value="NZ_JBGOFO010000002.1"/>
</dbReference>
<dbReference type="SMR" id="Q5HH71"/>
<dbReference type="KEGG" id="sac:SACOL1020"/>
<dbReference type="HOGENOM" id="CLU_132020_0_0_9"/>
<dbReference type="Proteomes" id="UP000000530">
    <property type="component" value="Chromosome"/>
</dbReference>
<dbReference type="GO" id="GO:0016788">
    <property type="term" value="F:hydrolase activity, acting on ester bonds"/>
    <property type="evidence" value="ECO:0007669"/>
    <property type="project" value="UniProtKB-UniRule"/>
</dbReference>
<dbReference type="Gene3D" id="3.90.1140.10">
    <property type="entry name" value="Cyclic phosphodiesterase"/>
    <property type="match status" value="1"/>
</dbReference>
<dbReference type="HAMAP" id="MF_01444">
    <property type="entry name" value="2H_phosphoesterase_YjcG"/>
    <property type="match status" value="1"/>
</dbReference>
<dbReference type="InterPro" id="IPR050580">
    <property type="entry name" value="2H_phosphoesterase_YjcG-like"/>
</dbReference>
<dbReference type="InterPro" id="IPR009097">
    <property type="entry name" value="Cyclic_Pdiesterase"/>
</dbReference>
<dbReference type="InterPro" id="IPR022932">
    <property type="entry name" value="YjcG"/>
</dbReference>
<dbReference type="NCBIfam" id="NF010223">
    <property type="entry name" value="PRK13679.1"/>
    <property type="match status" value="1"/>
</dbReference>
<dbReference type="PANTHER" id="PTHR40037:SF1">
    <property type="entry name" value="PHOSPHOESTERASE SAOUHSC_00951-RELATED"/>
    <property type="match status" value="1"/>
</dbReference>
<dbReference type="PANTHER" id="PTHR40037">
    <property type="entry name" value="PHOSPHOESTERASE YJCG-RELATED"/>
    <property type="match status" value="1"/>
</dbReference>
<dbReference type="Pfam" id="PF13563">
    <property type="entry name" value="2_5_RNA_ligase2"/>
    <property type="match status" value="1"/>
</dbReference>
<dbReference type="SUPFAM" id="SSF55144">
    <property type="entry name" value="LigT-like"/>
    <property type="match status" value="1"/>
</dbReference>
<keyword id="KW-0378">Hydrolase</keyword>
<feature type="chain" id="PRO_0000299338" description="Putative phosphoesterase SACOL1020">
    <location>
        <begin position="1"/>
        <end position="169"/>
    </location>
</feature>
<feature type="short sequence motif" description="HXTX 1" evidence="1">
    <location>
        <begin position="34"/>
        <end position="37"/>
    </location>
</feature>
<feature type="short sequence motif" description="HXTX 2" evidence="1">
    <location>
        <begin position="115"/>
        <end position="118"/>
    </location>
</feature>
<feature type="active site" description="Proton donor" evidence="1">
    <location>
        <position position="34"/>
    </location>
</feature>
<feature type="active site" description="Proton acceptor" evidence="1">
    <location>
        <position position="115"/>
    </location>
</feature>
<sequence length="169" mass="19326">MILGLALIPSKSFQEAVDSYRKRYDKQYSRIKPHVTIKAPFEIKDGDLDSVIEQVRARINGIPAVEVHATKASSFKPTNNVIYFKVAKTDDLEELFNRFNGEDFYGEAEHVFVPHFTIAQGLSSQEFEDIFGQVALAGVDHKEIIDELTLLRFDDDEDKWKVIETFKLA</sequence>
<protein>
    <recommendedName>
        <fullName evidence="1">Putative phosphoesterase SACOL1020</fullName>
        <ecNumber evidence="1">3.1.-.-</ecNumber>
    </recommendedName>
</protein>
<reference key="1">
    <citation type="journal article" date="2005" name="J. Bacteriol.">
        <title>Insights on evolution of virulence and resistance from the complete genome analysis of an early methicillin-resistant Staphylococcus aureus strain and a biofilm-producing methicillin-resistant Staphylococcus epidermidis strain.</title>
        <authorList>
            <person name="Gill S.R."/>
            <person name="Fouts D.E."/>
            <person name="Archer G.L."/>
            <person name="Mongodin E.F."/>
            <person name="DeBoy R.T."/>
            <person name="Ravel J."/>
            <person name="Paulsen I.T."/>
            <person name="Kolonay J.F."/>
            <person name="Brinkac L.M."/>
            <person name="Beanan M.J."/>
            <person name="Dodson R.J."/>
            <person name="Daugherty S.C."/>
            <person name="Madupu R."/>
            <person name="Angiuoli S.V."/>
            <person name="Durkin A.S."/>
            <person name="Haft D.H."/>
            <person name="Vamathevan J.J."/>
            <person name="Khouri H."/>
            <person name="Utterback T.R."/>
            <person name="Lee C."/>
            <person name="Dimitrov G."/>
            <person name="Jiang L."/>
            <person name="Qin H."/>
            <person name="Weidman J."/>
            <person name="Tran K."/>
            <person name="Kang K.H."/>
            <person name="Hance I.R."/>
            <person name="Nelson K.E."/>
            <person name="Fraser C.M."/>
        </authorList>
    </citation>
    <scope>NUCLEOTIDE SEQUENCE [LARGE SCALE GENOMIC DNA]</scope>
    <source>
        <strain>COL</strain>
    </source>
</reference>